<keyword id="KW-1185">Reference proteome</keyword>
<protein>
    <recommendedName>
        <fullName>Uncharacterized protein L263</fullName>
    </recommendedName>
</protein>
<sequence length="583" mass="67954">MSVVDKNYHKKTYHKYDHNKWVLIIYVKSVSHETNIDKFFYENTIDSLDSVINISSICLYTLNDQLSKILVDIQPKCKIPINLCVDSDNDILNTMKLHLDNNLSIIYFTNNTGFSVQQKQCHSLDCLSAYTTCIYDDLYSKVLNKFGLSKLITFDTLVVPNNNDSRKFIDNCIYFCRKLIGTDNEFKINLSLTITDSRMGYIVKDLETDLEIPNNNFVRNIVDKSFRQYLTEQFCSVKNNFKKCELPWKDDNFIYYPYLDMNVFPCDESVQNISYTSCNTNGFITNETNPFGKLFTRFNNPYEGVYLKKPQNNIQIPKHLHHIWIDEEPSINYINLWKTILVEPWKYTIWDNNSVLDLIKDTHWDQMYNCAKQSRQKQLIAMLSILEKYGGITINAYNIPLKSLDSLTIGNKFFVSFLAEDTGTSLSYRIIGSLPGGLGKNMIDPNISRKPYEGINNFFRSVNYNKTNDFVIPEIFDKLKSLLHVSVLNSNNTHNNFSKEIDYFLLSLSGQNIFIYPSYYFNANISTLPKRLSNKIIMINLQKYPDKKPIRIKTEVHRPYVVTKEAIADQLNENPKDKLKNIK</sequence>
<organismHost>
    <name type="scientific">Acanthamoeba polyphaga</name>
    <name type="common">Amoeba</name>
    <dbReference type="NCBI Taxonomy" id="5757"/>
</organismHost>
<accession>Q5UP20</accession>
<gene>
    <name type="ordered locus">MIMI_L263</name>
</gene>
<proteinExistence type="predicted"/>
<reference key="1">
    <citation type="journal article" date="2004" name="Science">
        <title>The 1.2-megabase genome sequence of Mimivirus.</title>
        <authorList>
            <person name="Raoult D."/>
            <person name="Audic S."/>
            <person name="Robert C."/>
            <person name="Abergel C."/>
            <person name="Renesto P."/>
            <person name="Ogata H."/>
            <person name="La Scola B."/>
            <person name="Susan M."/>
            <person name="Claverie J.-M."/>
        </authorList>
    </citation>
    <scope>NUCLEOTIDE SEQUENCE [LARGE SCALE GENOMIC DNA]</scope>
    <source>
        <strain>Rowbotham-Bradford</strain>
    </source>
</reference>
<feature type="chain" id="PRO_0000071257" description="Uncharacterized protein L263">
    <location>
        <begin position="1"/>
        <end position="583"/>
    </location>
</feature>
<dbReference type="EMBL" id="AY653733">
    <property type="protein sequence ID" value="AAV50535.1"/>
    <property type="molecule type" value="Genomic_DNA"/>
</dbReference>
<dbReference type="KEGG" id="vg:9924872"/>
<dbReference type="OrthoDB" id="16076at10239"/>
<dbReference type="Proteomes" id="UP000001134">
    <property type="component" value="Genome"/>
</dbReference>
<dbReference type="GO" id="GO:0016020">
    <property type="term" value="C:membrane"/>
    <property type="evidence" value="ECO:0007669"/>
    <property type="project" value="GOC"/>
</dbReference>
<dbReference type="GO" id="GO:0000030">
    <property type="term" value="F:mannosyltransferase activity"/>
    <property type="evidence" value="ECO:0007669"/>
    <property type="project" value="TreeGrafter"/>
</dbReference>
<dbReference type="GO" id="GO:0051999">
    <property type="term" value="P:mannosyl-inositol phosphorylceramide biosynthetic process"/>
    <property type="evidence" value="ECO:0007669"/>
    <property type="project" value="TreeGrafter"/>
</dbReference>
<dbReference type="InterPro" id="IPR051706">
    <property type="entry name" value="Glycosyltransferase_domain"/>
</dbReference>
<dbReference type="InterPro" id="IPR029044">
    <property type="entry name" value="Nucleotide-diphossugar_trans"/>
</dbReference>
<dbReference type="PANTHER" id="PTHR32385:SF15">
    <property type="entry name" value="INOSITOL PHOSPHOCERAMIDE MANNOSYLTRANSFERASE 1"/>
    <property type="match status" value="1"/>
</dbReference>
<dbReference type="PANTHER" id="PTHR32385">
    <property type="entry name" value="MANNOSYL PHOSPHORYLINOSITOL CERAMIDE SYNTHASE"/>
    <property type="match status" value="1"/>
</dbReference>
<dbReference type="SUPFAM" id="SSF53448">
    <property type="entry name" value="Nucleotide-diphospho-sugar transferases"/>
    <property type="match status" value="1"/>
</dbReference>
<name>YL263_MIMIV</name>
<organism>
    <name type="scientific">Acanthamoeba polyphaga mimivirus</name>
    <name type="common">APMV</name>
    <dbReference type="NCBI Taxonomy" id="212035"/>
    <lineage>
        <taxon>Viruses</taxon>
        <taxon>Varidnaviria</taxon>
        <taxon>Bamfordvirae</taxon>
        <taxon>Nucleocytoviricota</taxon>
        <taxon>Megaviricetes</taxon>
        <taxon>Imitervirales</taxon>
        <taxon>Mimiviridae</taxon>
        <taxon>Megamimivirinae</taxon>
        <taxon>Mimivirus</taxon>
        <taxon>Mimivirus bradfordmassiliense</taxon>
    </lineage>
</organism>